<evidence type="ECO:0000250" key="1"/>
<evidence type="ECO:0000256" key="2">
    <source>
        <dbReference type="SAM" id="MobiDB-lite"/>
    </source>
</evidence>
<evidence type="ECO:0000305" key="3"/>
<sequence length="614" mass="67620">MNLCSSAGATASTSSLSSSGHVESNSSGPSEAIHCFGVVGGGGNSGGSGRADTALNQSNRSTVNGGGGNPTNSNGPNLTHNEINAIMPPETRPKMVTVKHPESNKPKPTTKKIVKNIQADQDVIKALQRCRDEGIKRLDLSKSSITVLPNTVRECVHLTELYLYSNKIGQLPTEIGCLVNLRNLALNENSLTSLPESLKHCTQLKVLDLRHNKLAEIPSVIYRLRSLTTLYLRFNRITAVADDLRQLVNLTMLSLRENKIKELGSAIGALVNLTTLDVSHNHLEHLPDDIGNCVNLSALDLQHNELLDIPDSIGNLKSLVRLGLRYNRLNSVPISLKNCKSMDEFNVEGNGITQLPDGMLASLSALTTITLSRNQFTSYPTGGPAQFTNVYSINLEHNRIDKIPYGIFSRAKGLTKLNMKENMLTALPLDVGTWVNMVELNLATNALQKLPDDIMNLQNLEILILSNNMLKKIPNTIGNLRKLRILDLEENRIEVLPHEIGLLHELQRLILQTNQITMLPRSIGHLSNLTHLSVSENNLQFLPEEIGSLESLENLYINQNPGLEKLPFELALCQNLKYLNIDKCPLGTIPPEIQAGGPSLVLQWLKMHSPYRQM</sequence>
<accession>B4LXW1</accession>
<dbReference type="EMBL" id="CH940650">
    <property type="protein sequence ID" value="EDW67920.1"/>
    <property type="molecule type" value="Genomic_DNA"/>
</dbReference>
<dbReference type="RefSeq" id="XP_002054400.2">
    <property type="nucleotide sequence ID" value="XM_002054364.2"/>
</dbReference>
<dbReference type="RefSeq" id="XP_032295319.1">
    <property type="nucleotide sequence ID" value="XM_032439428.2"/>
</dbReference>
<dbReference type="SMR" id="B4LXW1"/>
<dbReference type="FunCoup" id="B4LXW1">
    <property type="interactions" value="2046"/>
</dbReference>
<dbReference type="STRING" id="7244.B4LXW1"/>
<dbReference type="EnsemblMetazoa" id="FBtr0238751">
    <property type="protein sequence ID" value="FBpp0237243"/>
    <property type="gene ID" value="FBgn0209930"/>
</dbReference>
<dbReference type="EnsemblMetazoa" id="XM_032439428.1">
    <property type="protein sequence ID" value="XP_032295319.1"/>
    <property type="gene ID" value="LOC6630693"/>
</dbReference>
<dbReference type="GeneID" id="6630693"/>
<dbReference type="eggNOG" id="KOG0619">
    <property type="taxonomic scope" value="Eukaryota"/>
</dbReference>
<dbReference type="HOGENOM" id="CLU_000288_18_23_1"/>
<dbReference type="InParanoid" id="B4LXW1"/>
<dbReference type="OMA" id="NQFTSYP"/>
<dbReference type="OrthoDB" id="676979at2759"/>
<dbReference type="PhylomeDB" id="B4LXW1"/>
<dbReference type="ChiTaRS" id="Sur-8">
    <property type="organism name" value="fly"/>
</dbReference>
<dbReference type="Proteomes" id="UP000008792">
    <property type="component" value="Unassembled WGS sequence"/>
</dbReference>
<dbReference type="GO" id="GO:0005737">
    <property type="term" value="C:cytoplasm"/>
    <property type="evidence" value="ECO:0007669"/>
    <property type="project" value="TreeGrafter"/>
</dbReference>
<dbReference type="GO" id="GO:0140361">
    <property type="term" value="P:cyclic-GMP-AMP transmembrane import across plasma membrane"/>
    <property type="evidence" value="ECO:0007669"/>
    <property type="project" value="TreeGrafter"/>
</dbReference>
<dbReference type="GO" id="GO:0046579">
    <property type="term" value="P:positive regulation of Ras protein signal transduction"/>
    <property type="evidence" value="ECO:0007669"/>
    <property type="project" value="TreeGrafter"/>
</dbReference>
<dbReference type="FunFam" id="3.80.10.10:FF:000031">
    <property type="entry name" value="leucine-rich repeat protein SHOC-2"/>
    <property type="match status" value="1"/>
</dbReference>
<dbReference type="FunFam" id="3.80.10.10:FF:000115">
    <property type="entry name" value="leucine-rich repeat protein SHOC-2"/>
    <property type="match status" value="1"/>
</dbReference>
<dbReference type="FunFam" id="3.80.10.10:FF:000281">
    <property type="entry name" value="Leucine-rich repeat protein soc-2"/>
    <property type="match status" value="1"/>
</dbReference>
<dbReference type="FunFam" id="3.80.10.10:FF:000450">
    <property type="entry name" value="Leucine-rich repeat protein soc-2"/>
    <property type="match status" value="1"/>
</dbReference>
<dbReference type="Gene3D" id="3.80.10.10">
    <property type="entry name" value="Ribonuclease Inhibitor"/>
    <property type="match status" value="4"/>
</dbReference>
<dbReference type="InterPro" id="IPR001611">
    <property type="entry name" value="Leu-rich_rpt"/>
</dbReference>
<dbReference type="InterPro" id="IPR003591">
    <property type="entry name" value="Leu-rich_rpt_typical-subtyp"/>
</dbReference>
<dbReference type="InterPro" id="IPR050715">
    <property type="entry name" value="LRR-SigEffector_domain"/>
</dbReference>
<dbReference type="InterPro" id="IPR032675">
    <property type="entry name" value="LRR_dom_sf"/>
</dbReference>
<dbReference type="InterPro" id="IPR055414">
    <property type="entry name" value="LRR_R13L4/SHOC2-like"/>
</dbReference>
<dbReference type="PANTHER" id="PTHR45752:SF26">
    <property type="entry name" value="LEUCINE-RICH REPEAT PROTEIN SHOC-2"/>
    <property type="match status" value="1"/>
</dbReference>
<dbReference type="PANTHER" id="PTHR45752">
    <property type="entry name" value="LEUCINE-RICH REPEAT-CONTAINING"/>
    <property type="match status" value="1"/>
</dbReference>
<dbReference type="Pfam" id="PF00560">
    <property type="entry name" value="LRR_1"/>
    <property type="match status" value="1"/>
</dbReference>
<dbReference type="Pfam" id="PF23598">
    <property type="entry name" value="LRR_14"/>
    <property type="match status" value="2"/>
</dbReference>
<dbReference type="Pfam" id="PF13855">
    <property type="entry name" value="LRR_8"/>
    <property type="match status" value="1"/>
</dbReference>
<dbReference type="SMART" id="SM00364">
    <property type="entry name" value="LRR_BAC"/>
    <property type="match status" value="11"/>
</dbReference>
<dbReference type="SMART" id="SM00365">
    <property type="entry name" value="LRR_SD22"/>
    <property type="match status" value="8"/>
</dbReference>
<dbReference type="SMART" id="SM00369">
    <property type="entry name" value="LRR_TYP"/>
    <property type="match status" value="15"/>
</dbReference>
<dbReference type="SUPFAM" id="SSF52058">
    <property type="entry name" value="L domain-like"/>
    <property type="match status" value="2"/>
</dbReference>
<dbReference type="PROSITE" id="PS51450">
    <property type="entry name" value="LRR"/>
    <property type="match status" value="18"/>
</dbReference>
<reference key="1">
    <citation type="journal article" date="2007" name="Nature">
        <title>Evolution of genes and genomes on the Drosophila phylogeny.</title>
        <authorList>
            <consortium name="Drosophila 12 genomes consortium"/>
        </authorList>
    </citation>
    <scope>NUCLEOTIDE SEQUENCE [LARGE SCALE GENOMIC DNA]</scope>
    <source>
        <strain>Tucson 15010-1051.87</strain>
    </source>
</reference>
<name>SUR8_DROVI</name>
<proteinExistence type="inferred from homology"/>
<organism>
    <name type="scientific">Drosophila virilis</name>
    <name type="common">Fruit fly</name>
    <dbReference type="NCBI Taxonomy" id="7244"/>
    <lineage>
        <taxon>Eukaryota</taxon>
        <taxon>Metazoa</taxon>
        <taxon>Ecdysozoa</taxon>
        <taxon>Arthropoda</taxon>
        <taxon>Hexapoda</taxon>
        <taxon>Insecta</taxon>
        <taxon>Pterygota</taxon>
        <taxon>Neoptera</taxon>
        <taxon>Endopterygota</taxon>
        <taxon>Diptera</taxon>
        <taxon>Brachycera</taxon>
        <taxon>Muscomorpha</taxon>
        <taxon>Ephydroidea</taxon>
        <taxon>Drosophilidae</taxon>
        <taxon>Drosophila</taxon>
    </lineage>
</organism>
<protein>
    <recommendedName>
        <fullName>Leucine-rich repeat protein soc-2 homolog</fullName>
    </recommendedName>
    <alternativeName>
        <fullName>Protein Sur-8 homolog</fullName>
    </alternativeName>
    <alternativeName>
        <fullName>Protein soc-2 homolog</fullName>
    </alternativeName>
</protein>
<comment type="function">
    <text evidence="1">Acts as a Ras effector and participates in MAPK pathway activation. Probably acts as a regulatory subunit of protein phosphatase that specifically dephosphorylates Raf kinase and stimulate Raf activity at specialized signaling complexes upon Ras activation (By similarity).</text>
</comment>
<comment type="similarity">
    <text evidence="3">Belongs to the SHOC2 family.</text>
</comment>
<gene>
    <name type="primary">Sur-8</name>
    <name type="ORF">GJ22826</name>
</gene>
<keyword id="KW-0433">Leucine-rich repeat</keyword>
<keyword id="KW-1185">Reference proteome</keyword>
<keyword id="KW-0677">Repeat</keyword>
<feature type="chain" id="PRO_0000385641" description="Leucine-rich repeat protein soc-2 homolog">
    <location>
        <begin position="1"/>
        <end position="614"/>
    </location>
</feature>
<feature type="repeat" description="LRR 1">
    <location>
        <begin position="134"/>
        <end position="155"/>
    </location>
</feature>
<feature type="repeat" description="LRR 2">
    <location>
        <begin position="157"/>
        <end position="178"/>
    </location>
</feature>
<feature type="repeat" description="LRR 3">
    <location>
        <begin position="180"/>
        <end position="201"/>
    </location>
</feature>
<feature type="repeat" description="LRR 4">
    <location>
        <begin position="203"/>
        <end position="224"/>
    </location>
</feature>
<feature type="repeat" description="LRR 5">
    <location>
        <begin position="226"/>
        <end position="247"/>
    </location>
</feature>
<feature type="repeat" description="LRR 6">
    <location>
        <begin position="249"/>
        <end position="270"/>
    </location>
</feature>
<feature type="repeat" description="LRR 7">
    <location>
        <begin position="272"/>
        <end position="293"/>
    </location>
</feature>
<feature type="repeat" description="LRR 8">
    <location>
        <begin position="295"/>
        <end position="316"/>
    </location>
</feature>
<feature type="repeat" description="LRR 9">
    <location>
        <begin position="318"/>
        <end position="340"/>
    </location>
</feature>
<feature type="repeat" description="LRR 10">
    <location>
        <begin position="341"/>
        <end position="362"/>
    </location>
</feature>
<feature type="repeat" description="LRR 11">
    <location>
        <begin position="365"/>
        <end position="386"/>
    </location>
</feature>
<feature type="repeat" description="LRR 12">
    <location>
        <begin position="389"/>
        <end position="410"/>
    </location>
</feature>
<feature type="repeat" description="LRR 13">
    <location>
        <begin position="413"/>
        <end position="434"/>
    </location>
</feature>
<feature type="repeat" description="LRR 14">
    <location>
        <begin position="436"/>
        <end position="457"/>
    </location>
</feature>
<feature type="repeat" description="LRR 15">
    <location>
        <begin position="459"/>
        <end position="480"/>
    </location>
</feature>
<feature type="repeat" description="LRR 16">
    <location>
        <begin position="482"/>
        <end position="503"/>
    </location>
</feature>
<feature type="repeat" description="LRR 17">
    <location>
        <begin position="505"/>
        <end position="526"/>
    </location>
</feature>
<feature type="repeat" description="LRR 18">
    <location>
        <begin position="528"/>
        <end position="549"/>
    </location>
</feature>
<feature type="repeat" description="LRR 19">
    <location>
        <begin position="551"/>
        <end position="573"/>
    </location>
</feature>
<feature type="repeat" description="LRR 20">
    <location>
        <begin position="575"/>
        <end position="596"/>
    </location>
</feature>
<feature type="region of interest" description="Disordered" evidence="2">
    <location>
        <begin position="1"/>
        <end position="29"/>
    </location>
</feature>
<feature type="region of interest" description="Disordered" evidence="2">
    <location>
        <begin position="44"/>
        <end position="79"/>
    </location>
</feature>